<name>UB2J1_MOUSE</name>
<proteinExistence type="evidence at protein level"/>
<dbReference type="EC" id="2.3.2.23"/>
<dbReference type="EMBL" id="AJ245899">
    <property type="protein sequence ID" value="CAB83217.1"/>
    <property type="molecule type" value="mRNA"/>
</dbReference>
<dbReference type="EMBL" id="AK003050">
    <property type="protein sequence ID" value="BAB22532.1"/>
    <property type="molecule type" value="mRNA"/>
</dbReference>
<dbReference type="EMBL" id="AK031669">
    <property type="protein sequence ID" value="BAC27502.1"/>
    <property type="molecule type" value="mRNA"/>
</dbReference>
<dbReference type="EMBL" id="BC024623">
    <property type="protein sequence ID" value="AAH24623.1"/>
    <property type="molecule type" value="mRNA"/>
</dbReference>
<dbReference type="CCDS" id="CCDS18019.1"/>
<dbReference type="RefSeq" id="NP_062532.2">
    <property type="nucleotide sequence ID" value="NM_019586.3"/>
</dbReference>
<dbReference type="SMR" id="Q9JJZ4"/>
<dbReference type="BioGRID" id="207860">
    <property type="interactions" value="8"/>
</dbReference>
<dbReference type="FunCoup" id="Q9JJZ4">
    <property type="interactions" value="3319"/>
</dbReference>
<dbReference type="STRING" id="10090.ENSMUSP00000118333"/>
<dbReference type="GlyGen" id="Q9JJZ4">
    <property type="glycosylation" value="1 site, 1 N-linked glycan (1 site)"/>
</dbReference>
<dbReference type="iPTMnet" id="Q9JJZ4"/>
<dbReference type="PhosphoSitePlus" id="Q9JJZ4"/>
<dbReference type="SwissPalm" id="Q9JJZ4"/>
<dbReference type="jPOST" id="Q9JJZ4"/>
<dbReference type="PaxDb" id="10090-ENSMUSP00000118333"/>
<dbReference type="PeptideAtlas" id="Q9JJZ4"/>
<dbReference type="ProteomicsDB" id="298165"/>
<dbReference type="Pumba" id="Q9JJZ4"/>
<dbReference type="ABCD" id="Q9JJZ4">
    <property type="antibodies" value="1 sequenced antibody"/>
</dbReference>
<dbReference type="Antibodypedia" id="1140">
    <property type="antibodies" value="363 antibodies from 26 providers"/>
</dbReference>
<dbReference type="DNASU" id="56228"/>
<dbReference type="Ensembl" id="ENSMUST00000124992.8">
    <property type="protein sequence ID" value="ENSMUSP00000118333.2"/>
    <property type="gene ID" value="ENSMUSG00000028277.14"/>
</dbReference>
<dbReference type="GeneID" id="56228"/>
<dbReference type="KEGG" id="mmu:56228"/>
<dbReference type="UCSC" id="uc008sfp.1">
    <property type="organism name" value="mouse"/>
</dbReference>
<dbReference type="AGR" id="MGI:1926245"/>
<dbReference type="CTD" id="51465"/>
<dbReference type="MGI" id="MGI:1926245">
    <property type="gene designation" value="Ube2j1"/>
</dbReference>
<dbReference type="VEuPathDB" id="HostDB:ENSMUSG00000028277"/>
<dbReference type="eggNOG" id="KOG0428">
    <property type="taxonomic scope" value="Eukaryota"/>
</dbReference>
<dbReference type="GeneTree" id="ENSGT00940000156652"/>
<dbReference type="InParanoid" id="Q9JJZ4"/>
<dbReference type="OMA" id="CGSTMKD"/>
<dbReference type="OrthoDB" id="1158011at2759"/>
<dbReference type="PhylomeDB" id="Q9JJZ4"/>
<dbReference type="TreeFam" id="TF101124"/>
<dbReference type="BRENDA" id="2.3.2.23">
    <property type="organism ID" value="3474"/>
</dbReference>
<dbReference type="Reactome" id="R-MMU-983168">
    <property type="pathway name" value="Antigen processing: Ubiquitination &amp; Proteasome degradation"/>
</dbReference>
<dbReference type="UniPathway" id="UPA00143"/>
<dbReference type="BioGRID-ORCS" id="56228">
    <property type="hits" value="9 hits in 78 CRISPR screens"/>
</dbReference>
<dbReference type="ChiTaRS" id="Ube2j1">
    <property type="organism name" value="mouse"/>
</dbReference>
<dbReference type="PRO" id="PR:Q9JJZ4"/>
<dbReference type="Proteomes" id="UP000000589">
    <property type="component" value="Chromosome 4"/>
</dbReference>
<dbReference type="RNAct" id="Q9JJZ4">
    <property type="molecule type" value="protein"/>
</dbReference>
<dbReference type="Bgee" id="ENSMUSG00000028277">
    <property type="expression patterns" value="Expressed in seminiferous tubule of testis and 268 other cell types or tissues"/>
</dbReference>
<dbReference type="ExpressionAtlas" id="Q9JJZ4">
    <property type="expression patterns" value="baseline and differential"/>
</dbReference>
<dbReference type="GO" id="GO:0000836">
    <property type="term" value="C:Hrd1p ubiquitin ligase complex"/>
    <property type="evidence" value="ECO:0007669"/>
    <property type="project" value="Ensembl"/>
</dbReference>
<dbReference type="GO" id="GO:0005524">
    <property type="term" value="F:ATP binding"/>
    <property type="evidence" value="ECO:0007669"/>
    <property type="project" value="UniProtKB-KW"/>
</dbReference>
<dbReference type="GO" id="GO:0061631">
    <property type="term" value="F:ubiquitin conjugating enzyme activity"/>
    <property type="evidence" value="ECO:0000266"/>
    <property type="project" value="MGI"/>
</dbReference>
<dbReference type="GO" id="GO:0031625">
    <property type="term" value="F:ubiquitin protein ligase binding"/>
    <property type="evidence" value="ECO:0007669"/>
    <property type="project" value="Ensembl"/>
</dbReference>
<dbReference type="GO" id="GO:0036503">
    <property type="term" value="P:ERAD pathway"/>
    <property type="evidence" value="ECO:0000314"/>
    <property type="project" value="MGI"/>
</dbReference>
<dbReference type="GO" id="GO:1904153">
    <property type="term" value="P:negative regulation of retrograde protein transport, ER to cytosol"/>
    <property type="evidence" value="ECO:0007669"/>
    <property type="project" value="Ensembl"/>
</dbReference>
<dbReference type="GO" id="GO:0018279">
    <property type="term" value="P:protein N-linked glycosylation via asparagine"/>
    <property type="evidence" value="ECO:0000250"/>
    <property type="project" value="UniProtKB"/>
</dbReference>
<dbReference type="GO" id="GO:0016567">
    <property type="term" value="P:protein ubiquitination"/>
    <property type="evidence" value="ECO:0007669"/>
    <property type="project" value="UniProtKB-UniPathway"/>
</dbReference>
<dbReference type="GO" id="GO:0010935">
    <property type="term" value="P:regulation of macrophage cytokine production"/>
    <property type="evidence" value="ECO:0000316"/>
    <property type="project" value="MGI"/>
</dbReference>
<dbReference type="GO" id="GO:0032680">
    <property type="term" value="P:regulation of tumor necrosis factor production"/>
    <property type="evidence" value="ECO:0000316"/>
    <property type="project" value="MGI"/>
</dbReference>
<dbReference type="GO" id="GO:0007286">
    <property type="term" value="P:spermatid development"/>
    <property type="evidence" value="ECO:0000315"/>
    <property type="project" value="MGI"/>
</dbReference>
<dbReference type="CDD" id="cd23799">
    <property type="entry name" value="UBCc_UBE2J"/>
    <property type="match status" value="1"/>
</dbReference>
<dbReference type="FunFam" id="3.10.110.10:FF:000043">
    <property type="entry name" value="ubiquitin-conjugating enzyme E2 J1"/>
    <property type="match status" value="1"/>
</dbReference>
<dbReference type="Gene3D" id="3.10.110.10">
    <property type="entry name" value="Ubiquitin Conjugating Enzyme"/>
    <property type="match status" value="1"/>
</dbReference>
<dbReference type="InterPro" id="IPR050113">
    <property type="entry name" value="Ub_conjugating_enzyme"/>
</dbReference>
<dbReference type="InterPro" id="IPR000608">
    <property type="entry name" value="UBQ-conjugat_E2_core"/>
</dbReference>
<dbReference type="InterPro" id="IPR016135">
    <property type="entry name" value="UBQ-conjugating_enzyme/RWD"/>
</dbReference>
<dbReference type="PANTHER" id="PTHR24067">
    <property type="entry name" value="UBIQUITIN-CONJUGATING ENZYME E2"/>
    <property type="match status" value="1"/>
</dbReference>
<dbReference type="Pfam" id="PF00179">
    <property type="entry name" value="UQ_con"/>
    <property type="match status" value="1"/>
</dbReference>
<dbReference type="SMART" id="SM00212">
    <property type="entry name" value="UBCc"/>
    <property type="match status" value="1"/>
</dbReference>
<dbReference type="SUPFAM" id="SSF54495">
    <property type="entry name" value="UBC-like"/>
    <property type="match status" value="1"/>
</dbReference>
<dbReference type="PROSITE" id="PS50127">
    <property type="entry name" value="UBC_2"/>
    <property type="match status" value="1"/>
</dbReference>
<evidence type="ECO:0000250" key="1">
    <source>
        <dbReference type="UniProtKB" id="Q9Y385"/>
    </source>
</evidence>
<evidence type="ECO:0000255" key="2"/>
<evidence type="ECO:0000255" key="3">
    <source>
        <dbReference type="PROSITE-ProRule" id="PRU00388"/>
    </source>
</evidence>
<evidence type="ECO:0000256" key="4">
    <source>
        <dbReference type="SAM" id="MobiDB-lite"/>
    </source>
</evidence>
<evidence type="ECO:0000269" key="5">
    <source>
    </source>
</evidence>
<evidence type="ECO:0000269" key="6">
    <source>
    </source>
</evidence>
<evidence type="ECO:0000305" key="7"/>
<evidence type="ECO:0007744" key="8">
    <source>
    </source>
</evidence>
<evidence type="ECO:0007744" key="9">
    <source>
    </source>
</evidence>
<evidence type="ECO:0007744" key="10">
    <source>
    </source>
</evidence>
<feature type="chain" id="PRO_0000082595" description="Ubiquitin-conjugating enzyme E2 J1">
    <location>
        <begin position="1"/>
        <end position="318"/>
    </location>
</feature>
<feature type="topological domain" description="Cytoplasmic" evidence="2">
    <location>
        <begin position="1"/>
        <end position="282"/>
    </location>
</feature>
<feature type="transmembrane region" description="Helical; Anchor for type IV membrane protein" evidence="2">
    <location>
        <begin position="283"/>
        <end position="303"/>
    </location>
</feature>
<feature type="topological domain" description="Lumenal" evidence="2">
    <location>
        <begin position="304"/>
        <end position="318"/>
    </location>
</feature>
<feature type="domain" description="UBC core" evidence="3">
    <location>
        <begin position="10"/>
        <end position="168"/>
    </location>
</feature>
<feature type="region of interest" description="Disordered" evidence="4">
    <location>
        <begin position="215"/>
        <end position="283"/>
    </location>
</feature>
<feature type="compositionally biased region" description="Polar residues" evidence="4">
    <location>
        <begin position="215"/>
        <end position="233"/>
    </location>
</feature>
<feature type="compositionally biased region" description="Low complexity" evidence="4">
    <location>
        <begin position="249"/>
        <end position="269"/>
    </location>
</feature>
<feature type="active site" description="Glycyl thioester intermediate" evidence="3">
    <location>
        <position position="91"/>
    </location>
</feature>
<feature type="modified residue" description="Phosphoserine" evidence="1">
    <location>
        <position position="184"/>
    </location>
</feature>
<feature type="modified residue" description="Phosphoserine" evidence="8 9 10">
    <location>
        <position position="266"/>
    </location>
</feature>
<feature type="modified residue" description="Phosphoserine" evidence="1">
    <location>
        <position position="268"/>
    </location>
</feature>
<feature type="sequence conflict" description="In Ref. 1; CAB83217." evidence="7" ref="1">
    <original>G</original>
    <variation>V</variation>
    <location>
        <position position="286"/>
    </location>
</feature>
<feature type="sequence conflict" description="In Ref. 1; CAB83217." evidence="7" ref="1">
    <original>M</original>
    <variation>V</variation>
    <location>
        <position position="289"/>
    </location>
</feature>
<protein>
    <recommendedName>
        <fullName>Ubiquitin-conjugating enzyme E2 J1</fullName>
        <ecNumber>2.3.2.23</ecNumber>
    </recommendedName>
    <alternativeName>
        <fullName>E2 ubiquitin-conjugating enzyme J1</fullName>
    </alternativeName>
    <alternativeName>
        <fullName>Non-canonical ubiquitin-conjugating enzyme 1</fullName>
        <shortName>NCUBE-1</shortName>
    </alternativeName>
</protein>
<gene>
    <name type="primary">Ube2j1</name>
    <name type="synonym">Ncube1</name>
</gene>
<keyword id="KW-0067">ATP-binding</keyword>
<keyword id="KW-0256">Endoplasmic reticulum</keyword>
<keyword id="KW-0472">Membrane</keyword>
<keyword id="KW-0547">Nucleotide-binding</keyword>
<keyword id="KW-0597">Phosphoprotein</keyword>
<keyword id="KW-1185">Reference proteome</keyword>
<keyword id="KW-0808">Transferase</keyword>
<keyword id="KW-0812">Transmembrane</keyword>
<keyword id="KW-1133">Transmembrane helix</keyword>
<keyword id="KW-0832">Ubl conjugation</keyword>
<keyword id="KW-0833">Ubl conjugation pathway</keyword>
<reference key="1">
    <citation type="journal article" date="2000" name="Biochem. Biophys. Res. Commun.">
        <title>Identification of a family of non-canonical ubiquitin-conjugating enzymes structurally related to yeast UBC6.</title>
        <authorList>
            <person name="Lester D.H."/>
            <person name="Farquharson C."/>
            <person name="Russell G.C."/>
            <person name="Houston B."/>
        </authorList>
    </citation>
    <scope>NUCLEOTIDE SEQUENCE [MRNA]</scope>
</reference>
<reference key="2">
    <citation type="journal article" date="2005" name="Science">
        <title>The transcriptional landscape of the mammalian genome.</title>
        <authorList>
            <person name="Carninci P."/>
            <person name="Kasukawa T."/>
            <person name="Katayama S."/>
            <person name="Gough J."/>
            <person name="Frith M.C."/>
            <person name="Maeda N."/>
            <person name="Oyama R."/>
            <person name="Ravasi T."/>
            <person name="Lenhard B."/>
            <person name="Wells C."/>
            <person name="Kodzius R."/>
            <person name="Shimokawa K."/>
            <person name="Bajic V.B."/>
            <person name="Brenner S.E."/>
            <person name="Batalov S."/>
            <person name="Forrest A.R."/>
            <person name="Zavolan M."/>
            <person name="Davis M.J."/>
            <person name="Wilming L.G."/>
            <person name="Aidinis V."/>
            <person name="Allen J.E."/>
            <person name="Ambesi-Impiombato A."/>
            <person name="Apweiler R."/>
            <person name="Aturaliya R.N."/>
            <person name="Bailey T.L."/>
            <person name="Bansal M."/>
            <person name="Baxter L."/>
            <person name="Beisel K.W."/>
            <person name="Bersano T."/>
            <person name="Bono H."/>
            <person name="Chalk A.M."/>
            <person name="Chiu K.P."/>
            <person name="Choudhary V."/>
            <person name="Christoffels A."/>
            <person name="Clutterbuck D.R."/>
            <person name="Crowe M.L."/>
            <person name="Dalla E."/>
            <person name="Dalrymple B.P."/>
            <person name="de Bono B."/>
            <person name="Della Gatta G."/>
            <person name="di Bernardo D."/>
            <person name="Down T."/>
            <person name="Engstrom P."/>
            <person name="Fagiolini M."/>
            <person name="Faulkner G."/>
            <person name="Fletcher C.F."/>
            <person name="Fukushima T."/>
            <person name="Furuno M."/>
            <person name="Futaki S."/>
            <person name="Gariboldi M."/>
            <person name="Georgii-Hemming P."/>
            <person name="Gingeras T.R."/>
            <person name="Gojobori T."/>
            <person name="Green R.E."/>
            <person name="Gustincich S."/>
            <person name="Harbers M."/>
            <person name="Hayashi Y."/>
            <person name="Hensch T.K."/>
            <person name="Hirokawa N."/>
            <person name="Hill D."/>
            <person name="Huminiecki L."/>
            <person name="Iacono M."/>
            <person name="Ikeo K."/>
            <person name="Iwama A."/>
            <person name="Ishikawa T."/>
            <person name="Jakt M."/>
            <person name="Kanapin A."/>
            <person name="Katoh M."/>
            <person name="Kawasawa Y."/>
            <person name="Kelso J."/>
            <person name="Kitamura H."/>
            <person name="Kitano H."/>
            <person name="Kollias G."/>
            <person name="Krishnan S.P."/>
            <person name="Kruger A."/>
            <person name="Kummerfeld S.K."/>
            <person name="Kurochkin I.V."/>
            <person name="Lareau L.F."/>
            <person name="Lazarevic D."/>
            <person name="Lipovich L."/>
            <person name="Liu J."/>
            <person name="Liuni S."/>
            <person name="McWilliam S."/>
            <person name="Madan Babu M."/>
            <person name="Madera M."/>
            <person name="Marchionni L."/>
            <person name="Matsuda H."/>
            <person name="Matsuzawa S."/>
            <person name="Miki H."/>
            <person name="Mignone F."/>
            <person name="Miyake S."/>
            <person name="Morris K."/>
            <person name="Mottagui-Tabar S."/>
            <person name="Mulder N."/>
            <person name="Nakano N."/>
            <person name="Nakauchi H."/>
            <person name="Ng P."/>
            <person name="Nilsson R."/>
            <person name="Nishiguchi S."/>
            <person name="Nishikawa S."/>
            <person name="Nori F."/>
            <person name="Ohara O."/>
            <person name="Okazaki Y."/>
            <person name="Orlando V."/>
            <person name="Pang K.C."/>
            <person name="Pavan W.J."/>
            <person name="Pavesi G."/>
            <person name="Pesole G."/>
            <person name="Petrovsky N."/>
            <person name="Piazza S."/>
            <person name="Reed J."/>
            <person name="Reid J.F."/>
            <person name="Ring B.Z."/>
            <person name="Ringwald M."/>
            <person name="Rost B."/>
            <person name="Ruan Y."/>
            <person name="Salzberg S.L."/>
            <person name="Sandelin A."/>
            <person name="Schneider C."/>
            <person name="Schoenbach C."/>
            <person name="Sekiguchi K."/>
            <person name="Semple C.A."/>
            <person name="Seno S."/>
            <person name="Sessa L."/>
            <person name="Sheng Y."/>
            <person name="Shibata Y."/>
            <person name="Shimada H."/>
            <person name="Shimada K."/>
            <person name="Silva D."/>
            <person name="Sinclair B."/>
            <person name="Sperling S."/>
            <person name="Stupka E."/>
            <person name="Sugiura K."/>
            <person name="Sultana R."/>
            <person name="Takenaka Y."/>
            <person name="Taki K."/>
            <person name="Tammoja K."/>
            <person name="Tan S.L."/>
            <person name="Tang S."/>
            <person name="Taylor M.S."/>
            <person name="Tegner J."/>
            <person name="Teichmann S.A."/>
            <person name="Ueda H.R."/>
            <person name="van Nimwegen E."/>
            <person name="Verardo R."/>
            <person name="Wei C.L."/>
            <person name="Yagi K."/>
            <person name="Yamanishi H."/>
            <person name="Zabarovsky E."/>
            <person name="Zhu S."/>
            <person name="Zimmer A."/>
            <person name="Hide W."/>
            <person name="Bult C."/>
            <person name="Grimmond S.M."/>
            <person name="Teasdale R.D."/>
            <person name="Liu E.T."/>
            <person name="Brusic V."/>
            <person name="Quackenbush J."/>
            <person name="Wahlestedt C."/>
            <person name="Mattick J.S."/>
            <person name="Hume D.A."/>
            <person name="Kai C."/>
            <person name="Sasaki D."/>
            <person name="Tomaru Y."/>
            <person name="Fukuda S."/>
            <person name="Kanamori-Katayama M."/>
            <person name="Suzuki M."/>
            <person name="Aoki J."/>
            <person name="Arakawa T."/>
            <person name="Iida J."/>
            <person name="Imamura K."/>
            <person name="Itoh M."/>
            <person name="Kato T."/>
            <person name="Kawaji H."/>
            <person name="Kawagashira N."/>
            <person name="Kawashima T."/>
            <person name="Kojima M."/>
            <person name="Kondo S."/>
            <person name="Konno H."/>
            <person name="Nakano K."/>
            <person name="Ninomiya N."/>
            <person name="Nishio T."/>
            <person name="Okada M."/>
            <person name="Plessy C."/>
            <person name="Shibata K."/>
            <person name="Shiraki T."/>
            <person name="Suzuki S."/>
            <person name="Tagami M."/>
            <person name="Waki K."/>
            <person name="Watahiki A."/>
            <person name="Okamura-Oho Y."/>
            <person name="Suzuki H."/>
            <person name="Kawai J."/>
            <person name="Hayashizaki Y."/>
        </authorList>
    </citation>
    <scope>NUCLEOTIDE SEQUENCE [LARGE SCALE MRNA]</scope>
    <source>
        <strain>C57BL/6J</strain>
        <tissue>Brain</tissue>
        <tissue>Testis</tissue>
    </source>
</reference>
<reference key="3">
    <citation type="journal article" date="2004" name="Genome Res.">
        <title>The status, quality, and expansion of the NIH full-length cDNA project: the Mammalian Gene Collection (MGC).</title>
        <authorList>
            <consortium name="The MGC Project Team"/>
        </authorList>
    </citation>
    <scope>NUCLEOTIDE SEQUENCE [LARGE SCALE MRNA]</scope>
    <source>
        <strain>FVB/N</strain>
        <tissue>Colon</tissue>
    </source>
</reference>
<reference key="4">
    <citation type="journal article" date="2007" name="Mol. Cell. Proteomics">
        <title>Mitochondrial phosphoproteome revealed by an improved IMAC method and MS/MS/MS.</title>
        <authorList>
            <person name="Lee J."/>
            <person name="Xu Y."/>
            <person name="Chen Y."/>
            <person name="Sprung R."/>
            <person name="Kim S.C."/>
            <person name="Xie S."/>
            <person name="Zhao Y."/>
        </authorList>
    </citation>
    <scope>PHOSPHORYLATION [LARGE SCALE ANALYSIS] AT SER-266</scope>
    <scope>IDENTIFICATION BY MASS SPECTROMETRY [LARGE SCALE ANALYSIS]</scope>
    <source>
        <tissue>Liver</tissue>
    </source>
</reference>
<reference key="5">
    <citation type="journal article" date="2007" name="Proc. Natl. Acad. Sci. U.S.A.">
        <title>Large-scale phosphorylation analysis of mouse liver.</title>
        <authorList>
            <person name="Villen J."/>
            <person name="Beausoleil S.A."/>
            <person name="Gerber S.A."/>
            <person name="Gygi S.P."/>
        </authorList>
    </citation>
    <scope>PHOSPHORYLATION [LARGE SCALE ANALYSIS] AT SER-266</scope>
    <scope>IDENTIFICATION BY MASS SPECTROMETRY [LARGE SCALE ANALYSIS]</scope>
    <source>
        <tissue>Liver</tissue>
    </source>
</reference>
<reference key="6">
    <citation type="journal article" date="2009" name="Immunity">
        <title>The phagosomal proteome in interferon-gamma-activated macrophages.</title>
        <authorList>
            <person name="Trost M."/>
            <person name="English L."/>
            <person name="Lemieux S."/>
            <person name="Courcelles M."/>
            <person name="Desjardins M."/>
            <person name="Thibault P."/>
        </authorList>
    </citation>
    <scope>IDENTIFICATION BY MASS SPECTROMETRY [LARGE SCALE ANALYSIS]</scope>
</reference>
<reference key="7">
    <citation type="journal article" date="2010" name="Cell">
        <title>A tissue-specific atlas of mouse protein phosphorylation and expression.</title>
        <authorList>
            <person name="Huttlin E.L."/>
            <person name="Jedrychowski M.P."/>
            <person name="Elias J.E."/>
            <person name="Goswami T."/>
            <person name="Rad R."/>
            <person name="Beausoleil S.A."/>
            <person name="Villen J."/>
            <person name="Haas W."/>
            <person name="Sowa M.E."/>
            <person name="Gygi S.P."/>
        </authorList>
    </citation>
    <scope>PHOSPHORYLATION [LARGE SCALE ANALYSIS] AT SER-266</scope>
    <scope>IDENTIFICATION BY MASS SPECTROMETRY [LARGE SCALE ANALYSIS]</scope>
    <source>
        <tissue>Brain</tissue>
        <tissue>Brown adipose tissue</tissue>
        <tissue>Heart</tissue>
        <tissue>Kidney</tissue>
        <tissue>Liver</tissue>
        <tissue>Lung</tissue>
        <tissue>Pancreas</tissue>
        <tissue>Spleen</tissue>
        <tissue>Testis</tissue>
    </source>
</reference>
<reference key="8">
    <citation type="journal article" date="2014" name="J. Biol. Chem.">
        <title>The E2 ubiquitin-conjugating enzyme UBE2J1 is required for spermiogenesis in mice.</title>
        <authorList>
            <person name="Koenig P.A."/>
            <person name="Nicholls P.K."/>
            <person name="Schmidt F.I."/>
            <person name="Hagiwara M."/>
            <person name="Maruyama T."/>
            <person name="Frydman G.H."/>
            <person name="Watson N."/>
            <person name="Page D.C."/>
            <person name="Ploegh H.L."/>
        </authorList>
    </citation>
    <scope>FUNCTION</scope>
    <scope>DISRUPTION PHENOTYPE</scope>
</reference>
<reference key="9">
    <citation type="journal article" date="2022" name="BMC Biol.">
        <title>The testis-specific E3 ubiquitin ligase RNF133 is required for fecundity in mice.</title>
        <authorList>
            <person name="Nozawa K."/>
            <person name="Fujihara Y."/>
            <person name="Devlin D.J."/>
            <person name="Deras R.E."/>
            <person name="Kent K."/>
            <person name="Larina I.V."/>
            <person name="Umezu K."/>
            <person name="Yu Z."/>
            <person name="Sutton C.M."/>
            <person name="Ye Q."/>
            <person name="Dean L.K."/>
            <person name="Emori C."/>
            <person name="Ikawa M."/>
            <person name="Garcia T.X."/>
            <person name="Matzuk M.M."/>
        </authorList>
    </citation>
    <scope>TISSUE SPECIFICITY</scope>
    <scope>FUNCTION</scope>
    <scope>INTERACTION WITH RNF133</scope>
    <scope>SUBCELLULAR LOCATION</scope>
</reference>
<sequence length="318" mass="34990">METRYNLKSPAVKRLMKEAAELKDPTDHYHAQPLEDNLFEWHFTVRGPPDSDFDGGVYHGRIVLPPEYPMKPPSIILLTANGRFEVGKKICLSISGHHPETWQPSWSIRTALLAIIGFMPTKGEGAIGSLDYTPEERRALAKKSQDFCCEGCGSAMKDVLLPLKSGSGSSQADQEAKELARQISFKAEVNSSGKTIAESDLNQCFSLNDSQDDLPTTFQGATASTSYGAQNPSGAPLPQPTQPAPKNTSMSPRQRRAQQQSQRRPSTSPDVLQGQPPRAHHTEHGGSAMLIIILTLALAALIFRRIYLANEYIFDFEL</sequence>
<organism>
    <name type="scientific">Mus musculus</name>
    <name type="common">Mouse</name>
    <dbReference type="NCBI Taxonomy" id="10090"/>
    <lineage>
        <taxon>Eukaryota</taxon>
        <taxon>Metazoa</taxon>
        <taxon>Chordata</taxon>
        <taxon>Craniata</taxon>
        <taxon>Vertebrata</taxon>
        <taxon>Euteleostomi</taxon>
        <taxon>Mammalia</taxon>
        <taxon>Eutheria</taxon>
        <taxon>Euarchontoglires</taxon>
        <taxon>Glires</taxon>
        <taxon>Rodentia</taxon>
        <taxon>Myomorpha</taxon>
        <taxon>Muroidea</taxon>
        <taxon>Muridae</taxon>
        <taxon>Murinae</taxon>
        <taxon>Mus</taxon>
        <taxon>Mus</taxon>
    </lineage>
</organism>
<accession>Q9JJZ4</accession>
<accession>Q9DC92</accession>
<comment type="function">
    <text evidence="1 6">Catalyzes the covalent attachment of ubiquitin to other proteins. Functions in the selective degradation of misfolded membrane proteins from the endoplasmic reticulum (ERAD) and is essential for cells to recover from ER stress. Plays a role in MAPKAPK2-dependent translational control of TNF-alpha synthesis. Also acts as a platform for perinuclear positioning of the endosomal system by mediating ubiquitination of SQSTM1 through interaction with the E3 ubiquitin-protein ligase RNF26. Plays a role in male fecundity through the interaction with the E3 ubiquitin-protein ligase RNF133 (PubMed:35831855).</text>
</comment>
<comment type="catalytic activity">
    <reaction evidence="3">
        <text>S-ubiquitinyl-[E1 ubiquitin-activating enzyme]-L-cysteine + [E2 ubiquitin-conjugating enzyme]-L-cysteine = [E1 ubiquitin-activating enzyme]-L-cysteine + S-ubiquitinyl-[E2 ubiquitin-conjugating enzyme]-L-cysteine.</text>
        <dbReference type="EC" id="2.3.2.23"/>
    </reaction>
</comment>
<comment type="pathway">
    <text evidence="3">Protein modification; protein ubiquitination.</text>
</comment>
<comment type="subunit">
    <text evidence="1 6">Component of the HRD1 complex, which comprises at least SYNV1/HRD1, DERL1/2, FAM8A1, HERPUD1/HERP, OS9, SEL1L and UBE2J1. Interacts with E3 ligase RNF26. Interacts with E3 ligase RNF133 (PubMed:35831855).</text>
</comment>
<comment type="subcellular location">
    <subcellularLocation>
        <location evidence="6">Endoplasmic reticulum membrane</location>
        <topology evidence="1">Single-pass type IV membrane protein</topology>
    </subcellularLocation>
</comment>
<comment type="PTM">
    <text evidence="1">Phosphorylated at Ser-184 in a cytosolic stress-dependent manner by MAP kinase p38 MAPKAPK2.</text>
</comment>
<comment type="PTM">
    <text evidence="1">Phosphorylated UBE2J1 is rapidly ubiquitinated and subsequently degraded by the proteasome.</text>
</comment>
<comment type="disruption phenotype">
    <text evidence="5">Deletion mice have reduced viability and fail to thrive early after birth. Specific components of the ER dislocation machinery are up-regulated. In addition, males are sterile due to a defect in late spermatogenesis.</text>
</comment>
<comment type="similarity">
    <text evidence="3">Belongs to the ubiquitin-conjugating enzyme family.</text>
</comment>